<feature type="chain" id="PRO_1000011536" description="4-hydroxy-3-methylbut-2-en-1-yl diphosphate synthase (ferredoxin)">
    <location>
        <begin position="1"/>
        <end position="401"/>
    </location>
</feature>
<feature type="binding site" evidence="1">
    <location>
        <position position="306"/>
    </location>
    <ligand>
        <name>[4Fe-4S] cluster</name>
        <dbReference type="ChEBI" id="CHEBI:49883"/>
    </ligand>
</feature>
<feature type="binding site" evidence="1">
    <location>
        <position position="309"/>
    </location>
    <ligand>
        <name>[4Fe-4S] cluster</name>
        <dbReference type="ChEBI" id="CHEBI:49883"/>
    </ligand>
</feature>
<feature type="binding site" evidence="1">
    <location>
        <position position="340"/>
    </location>
    <ligand>
        <name>[4Fe-4S] cluster</name>
        <dbReference type="ChEBI" id="CHEBI:49883"/>
    </ligand>
</feature>
<feature type="binding site" evidence="1">
    <location>
        <position position="347"/>
    </location>
    <ligand>
        <name>[4Fe-4S] cluster</name>
        <dbReference type="ChEBI" id="CHEBI:49883"/>
    </ligand>
</feature>
<proteinExistence type="inferred from homology"/>
<gene>
    <name evidence="1" type="primary">ispG</name>
    <name type="ordered locus">Syncc9902_1179</name>
</gene>
<reference key="1">
    <citation type="submission" date="2005-08" db="EMBL/GenBank/DDBJ databases">
        <title>Complete sequence of Synechococcus sp. CC9902.</title>
        <authorList>
            <person name="Copeland A."/>
            <person name="Lucas S."/>
            <person name="Lapidus A."/>
            <person name="Barry K."/>
            <person name="Detter J.C."/>
            <person name="Glavina T."/>
            <person name="Hammon N."/>
            <person name="Israni S."/>
            <person name="Pitluck S."/>
            <person name="Martinez M."/>
            <person name="Schmutz J."/>
            <person name="Larimer F."/>
            <person name="Land M."/>
            <person name="Kyrpides N."/>
            <person name="Ivanova N."/>
            <person name="Richardson P."/>
        </authorList>
    </citation>
    <scope>NUCLEOTIDE SEQUENCE [LARGE SCALE GENOMIC DNA]</scope>
    <source>
        <strain>CC9902</strain>
    </source>
</reference>
<keyword id="KW-0004">4Fe-4S</keyword>
<keyword id="KW-0408">Iron</keyword>
<keyword id="KW-0411">Iron-sulfur</keyword>
<keyword id="KW-0414">Isoprene biosynthesis</keyword>
<keyword id="KW-0479">Metal-binding</keyword>
<keyword id="KW-0560">Oxidoreductase</keyword>
<keyword id="KW-1185">Reference proteome</keyword>
<organism>
    <name type="scientific">Synechococcus sp. (strain CC9902)</name>
    <dbReference type="NCBI Taxonomy" id="316279"/>
    <lineage>
        <taxon>Bacteria</taxon>
        <taxon>Bacillati</taxon>
        <taxon>Cyanobacteriota</taxon>
        <taxon>Cyanophyceae</taxon>
        <taxon>Synechococcales</taxon>
        <taxon>Synechococcaceae</taxon>
        <taxon>Synechococcus</taxon>
    </lineage>
</organism>
<accession>Q3AXP3</accession>
<evidence type="ECO:0000255" key="1">
    <source>
        <dbReference type="HAMAP-Rule" id="MF_00159"/>
    </source>
</evidence>
<dbReference type="EC" id="1.17.7.1" evidence="1"/>
<dbReference type="EMBL" id="CP000097">
    <property type="protein sequence ID" value="ABB26143.1"/>
    <property type="molecule type" value="Genomic_DNA"/>
</dbReference>
<dbReference type="RefSeq" id="WP_011359970.1">
    <property type="nucleotide sequence ID" value="NC_007513.1"/>
</dbReference>
<dbReference type="SMR" id="Q3AXP3"/>
<dbReference type="STRING" id="316279.Syncc9902_1179"/>
<dbReference type="KEGG" id="sye:Syncc9902_1179"/>
<dbReference type="eggNOG" id="COG0821">
    <property type="taxonomic scope" value="Bacteria"/>
</dbReference>
<dbReference type="HOGENOM" id="CLU_042258_0_0_3"/>
<dbReference type="OrthoDB" id="9803214at2"/>
<dbReference type="UniPathway" id="UPA00056">
    <property type="reaction ID" value="UER00096"/>
</dbReference>
<dbReference type="Proteomes" id="UP000002712">
    <property type="component" value="Chromosome"/>
</dbReference>
<dbReference type="GO" id="GO:0051539">
    <property type="term" value="F:4 iron, 4 sulfur cluster binding"/>
    <property type="evidence" value="ECO:0007669"/>
    <property type="project" value="UniProtKB-UniRule"/>
</dbReference>
<dbReference type="GO" id="GO:0046429">
    <property type="term" value="F:4-hydroxy-3-methylbut-2-en-1-yl diphosphate synthase activity (ferredoxin)"/>
    <property type="evidence" value="ECO:0007669"/>
    <property type="project" value="UniProtKB-UniRule"/>
</dbReference>
<dbReference type="GO" id="GO:0005506">
    <property type="term" value="F:iron ion binding"/>
    <property type="evidence" value="ECO:0007669"/>
    <property type="project" value="InterPro"/>
</dbReference>
<dbReference type="GO" id="GO:0019288">
    <property type="term" value="P:isopentenyl diphosphate biosynthetic process, methylerythritol 4-phosphate pathway"/>
    <property type="evidence" value="ECO:0007669"/>
    <property type="project" value="UniProtKB-UniRule"/>
</dbReference>
<dbReference type="GO" id="GO:0016114">
    <property type="term" value="P:terpenoid biosynthetic process"/>
    <property type="evidence" value="ECO:0007669"/>
    <property type="project" value="InterPro"/>
</dbReference>
<dbReference type="FunFam" id="3.20.20.20:FF:000005">
    <property type="entry name" value="4-hydroxy-3-methylbut-2-en-1-yl diphosphate synthase (flavodoxin)"/>
    <property type="match status" value="1"/>
</dbReference>
<dbReference type="Gene3D" id="3.20.20.20">
    <property type="entry name" value="Dihydropteroate synthase-like"/>
    <property type="match status" value="1"/>
</dbReference>
<dbReference type="Gene3D" id="3.30.413.10">
    <property type="entry name" value="Sulfite Reductase Hemoprotein, domain 1"/>
    <property type="match status" value="1"/>
</dbReference>
<dbReference type="HAMAP" id="MF_00159">
    <property type="entry name" value="IspG"/>
    <property type="match status" value="1"/>
</dbReference>
<dbReference type="InterPro" id="IPR011005">
    <property type="entry name" value="Dihydropteroate_synth-like_sf"/>
</dbReference>
<dbReference type="InterPro" id="IPR016425">
    <property type="entry name" value="IspG_bac"/>
</dbReference>
<dbReference type="InterPro" id="IPR004588">
    <property type="entry name" value="IspG_bac-typ"/>
</dbReference>
<dbReference type="InterPro" id="IPR045854">
    <property type="entry name" value="NO2/SO3_Rdtase_4Fe4S_sf"/>
</dbReference>
<dbReference type="NCBIfam" id="TIGR00612">
    <property type="entry name" value="ispG_gcpE"/>
    <property type="match status" value="1"/>
</dbReference>
<dbReference type="NCBIfam" id="NF001540">
    <property type="entry name" value="PRK00366.1"/>
    <property type="match status" value="1"/>
</dbReference>
<dbReference type="PANTHER" id="PTHR30454">
    <property type="entry name" value="4-HYDROXY-3-METHYLBUT-2-EN-1-YL DIPHOSPHATE SYNTHASE"/>
    <property type="match status" value="1"/>
</dbReference>
<dbReference type="PANTHER" id="PTHR30454:SF0">
    <property type="entry name" value="4-HYDROXY-3-METHYLBUT-2-EN-1-YL DIPHOSPHATE SYNTHASE (FERREDOXIN), CHLOROPLASTIC"/>
    <property type="match status" value="1"/>
</dbReference>
<dbReference type="Pfam" id="PF04551">
    <property type="entry name" value="GcpE"/>
    <property type="match status" value="1"/>
</dbReference>
<dbReference type="PIRSF" id="PIRSF004640">
    <property type="entry name" value="IspG"/>
    <property type="match status" value="1"/>
</dbReference>
<dbReference type="SUPFAM" id="SSF56014">
    <property type="entry name" value="Nitrite and sulphite reductase 4Fe-4S domain-like"/>
    <property type="match status" value="1"/>
</dbReference>
<sequence length="401" mass="44012">MTALDRRYDTQIHRRVTRTVMVGSVPIGSEHPIAVQSMINEDTLDIDGSVAGIIRLVDAGCEIVRVTTPSIGHAKAMGKIKAELSAKGCNVPLVADVHHNGTKIALEVAQHVDKVRINPGLFVFDKPDPNRQEFTESEFAEIGTRIRETFEPLVKLLREQNKALRIGVNHGSLAERMLFTYGDTPKGMVESAMEFVRICDDLDFHNIVISMKASRAPVMLSAYRLMADTMDQEGFNYPLHLGVTEAGDGDYGRIKSTAGIATLLAEGLGDTIRVSLTEAPEKEIPVCYSILQSLGLRKTMVEYIACPSCGRTLFNLEDVLHKVRNATSHLKGLDIAVMGCIVNGPGEMADADYGYVGKGPGIIALYRGREEIRKVPEKEGVQALIQLIQEDGLWVDPDETR</sequence>
<name>ISPG_SYNS9</name>
<comment type="function">
    <text evidence="1">Converts 2C-methyl-D-erythritol 2,4-cyclodiphosphate (ME-2,4cPP) into 1-hydroxy-2-methyl-2-(E)-butenyl 4-diphosphate.</text>
</comment>
<comment type="catalytic activity">
    <reaction evidence="1">
        <text>(2E)-4-hydroxy-3-methylbut-2-enyl diphosphate + 2 oxidized [2Fe-2S]-[ferredoxin] + H2O = 2-C-methyl-D-erythritol 2,4-cyclic diphosphate + 2 reduced [2Fe-2S]-[ferredoxin] + H(+)</text>
        <dbReference type="Rhea" id="RHEA:26119"/>
        <dbReference type="Rhea" id="RHEA-COMP:10000"/>
        <dbReference type="Rhea" id="RHEA-COMP:10001"/>
        <dbReference type="ChEBI" id="CHEBI:15377"/>
        <dbReference type="ChEBI" id="CHEBI:15378"/>
        <dbReference type="ChEBI" id="CHEBI:33737"/>
        <dbReference type="ChEBI" id="CHEBI:33738"/>
        <dbReference type="ChEBI" id="CHEBI:58483"/>
        <dbReference type="ChEBI" id="CHEBI:128753"/>
        <dbReference type="EC" id="1.17.7.1"/>
    </reaction>
</comment>
<comment type="cofactor">
    <cofactor evidence="1">
        <name>[4Fe-4S] cluster</name>
        <dbReference type="ChEBI" id="CHEBI:49883"/>
    </cofactor>
    <text evidence="1">Binds 1 [4Fe-4S] cluster.</text>
</comment>
<comment type="pathway">
    <text evidence="1">Isoprenoid biosynthesis; isopentenyl diphosphate biosynthesis via DXP pathway; isopentenyl diphosphate from 1-deoxy-D-xylulose 5-phosphate: step 5/6.</text>
</comment>
<comment type="similarity">
    <text evidence="1">Belongs to the IspG family.</text>
</comment>
<protein>
    <recommendedName>
        <fullName evidence="1">4-hydroxy-3-methylbut-2-en-1-yl diphosphate synthase (ferredoxin)</fullName>
        <ecNumber evidence="1">1.17.7.1</ecNumber>
    </recommendedName>
    <alternativeName>
        <fullName evidence="1">1-hydroxy-2-methyl-2-(E)-butenyl 4-diphosphate synthase</fullName>
    </alternativeName>
</protein>